<comment type="function">
    <text evidence="1">DNA ligase that catalyzes the formation of phosphodiester linkages between 5'-phosphoryl and 3'-hydroxyl groups in double-stranded DNA using NAD as a coenzyme and as the energy source for the reaction. It is essential for DNA replication and repair of damaged DNA.</text>
</comment>
<comment type="catalytic activity">
    <reaction evidence="1">
        <text>NAD(+) + (deoxyribonucleotide)n-3'-hydroxyl + 5'-phospho-(deoxyribonucleotide)m = (deoxyribonucleotide)n+m + AMP + beta-nicotinamide D-nucleotide.</text>
        <dbReference type="EC" id="6.5.1.2"/>
    </reaction>
</comment>
<comment type="cofactor">
    <cofactor evidence="1">
        <name>Mg(2+)</name>
        <dbReference type="ChEBI" id="CHEBI:18420"/>
    </cofactor>
    <cofactor evidence="1">
        <name>Mn(2+)</name>
        <dbReference type="ChEBI" id="CHEBI:29035"/>
    </cofactor>
</comment>
<comment type="similarity">
    <text evidence="1">Belongs to the NAD-dependent DNA ligase family. LigA subfamily.</text>
</comment>
<gene>
    <name evidence="1" type="primary">ligA</name>
    <name type="ordered locus">Erum6940</name>
    <name type="ordered locus">ERWE_CDS_07290</name>
</gene>
<reference key="1">
    <citation type="journal article" date="2005" name="Proc. Natl. Acad. Sci. U.S.A.">
        <title>The genome of the heartwater agent Ehrlichia ruminantium contains multiple tandem repeats of actively variable copy number.</title>
        <authorList>
            <person name="Collins N.E."/>
            <person name="Liebenberg J."/>
            <person name="de Villiers E.P."/>
            <person name="Brayton K.A."/>
            <person name="Louw E."/>
            <person name="Pretorius A."/>
            <person name="Faber F.E."/>
            <person name="van Heerden H."/>
            <person name="Josemans A."/>
            <person name="van Kleef M."/>
            <person name="Steyn H.C."/>
            <person name="van Strijp M.F."/>
            <person name="Zweygarth E."/>
            <person name="Jongejan F."/>
            <person name="Maillard J.C."/>
            <person name="Berthier D."/>
            <person name="Botha M."/>
            <person name="Joubert F."/>
            <person name="Corton C.H."/>
            <person name="Thomson N.R."/>
            <person name="Allsopp M.T."/>
            <person name="Allsopp B.A."/>
        </authorList>
    </citation>
    <scope>NUCLEOTIDE SEQUENCE [LARGE SCALE GENOMIC DNA]</scope>
    <source>
        <strain>Welgevonden</strain>
    </source>
</reference>
<reference key="2">
    <citation type="journal article" date="2006" name="J. Bacteriol.">
        <title>Comparative genomic analysis of three strains of Ehrlichia ruminantium reveals an active process of genome size plasticity.</title>
        <authorList>
            <person name="Frutos R."/>
            <person name="Viari A."/>
            <person name="Ferraz C."/>
            <person name="Morgat A."/>
            <person name="Eychenie S."/>
            <person name="Kandassamy Y."/>
            <person name="Chantal I."/>
            <person name="Bensaid A."/>
            <person name="Coissac E."/>
            <person name="Vachiery N."/>
            <person name="Demaille J."/>
            <person name="Martinez D."/>
        </authorList>
    </citation>
    <scope>NUCLEOTIDE SEQUENCE [LARGE SCALE GENOMIC DNA]</scope>
    <source>
        <strain>Welgevonden</strain>
    </source>
</reference>
<proteinExistence type="inferred from homology"/>
<accession>Q5HAI7</accession>
<accession>Q5FDI2</accession>
<organism>
    <name type="scientific">Ehrlichia ruminantium (strain Welgevonden)</name>
    <dbReference type="NCBI Taxonomy" id="254945"/>
    <lineage>
        <taxon>Bacteria</taxon>
        <taxon>Pseudomonadati</taxon>
        <taxon>Pseudomonadota</taxon>
        <taxon>Alphaproteobacteria</taxon>
        <taxon>Rickettsiales</taxon>
        <taxon>Anaplasmataceae</taxon>
        <taxon>Ehrlichia</taxon>
    </lineage>
</organism>
<keyword id="KW-0227">DNA damage</keyword>
<keyword id="KW-0234">DNA repair</keyword>
<keyword id="KW-0235">DNA replication</keyword>
<keyword id="KW-0436">Ligase</keyword>
<keyword id="KW-0460">Magnesium</keyword>
<keyword id="KW-0464">Manganese</keyword>
<keyword id="KW-0479">Metal-binding</keyword>
<keyword id="KW-0520">NAD</keyword>
<keyword id="KW-0862">Zinc</keyword>
<sequence length="674" mass="76745">MTDQEEAKLILDKLNEKIRYHDLLYYTQDSPEISDAEYDDLCHQRSIILEKFPSLNSYYQDYIGGDPDSRFSKVKHNERMLSLDNAFNKQDVEKFMVRTRKLLDMKENESLCFSCELKIDGLSFSIIYKNGKLFQASTRGNGYFGENITNNVKTIENLPHTIQNAPDFLEVRGEVYIDRNDFIQLNNEGKNFANPRNAAAGSIRQLDPTITAQRKLKYCMYTIVNSNCLTQTESLNLLNSWGFCTNEHTISTDNFEEAINFYNKMYNNRSNISYDIDGIIYKINNIKLQHILGTTSKSPRWAIAYKFPAIEGKTKLNKISIQVGRTGVLTPIAELAPINIGGVVITRASLHNKSEIERKDIREGDYVIVKRAGDVIPQVVDVDKSLRTVELAEFNFPTACPACGSTVYQAQQEVSIYCMGGLFCHNQILEKIRHFVSKDAFNIIGLGKKQLLFFYEYGLITNIIDIFTLEEKINNKNIQLSSFNGWGEKSINNLLSAINNSKVINLENFIFSLGIRFVGKHIAKILANHFISYKNWYTEMLKLAQDVNYTINIQQVGLKTINSLRTFFIEQHNLNMINNLVEHLTIIDAQSNSYVSLIHGKTIVFTGELSSMSRSEAKLKSETAGAKVSSSLSKNTDFLIIGNNPGSKYKKAQSLNIQILSEDIWLQYIQPNKV</sequence>
<protein>
    <recommendedName>
        <fullName evidence="1">DNA ligase</fullName>
        <ecNumber evidence="1">6.5.1.2</ecNumber>
    </recommendedName>
    <alternativeName>
        <fullName evidence="1">Polydeoxyribonucleotide synthase [NAD(+)]</fullName>
    </alternativeName>
</protein>
<feature type="chain" id="PRO_0000313226" description="DNA ligase">
    <location>
        <begin position="1"/>
        <end position="674"/>
    </location>
</feature>
<feature type="domain" description="BRCT" evidence="1">
    <location>
        <begin position="593"/>
        <end position="674"/>
    </location>
</feature>
<feature type="active site" description="N6-AMP-lysine intermediate" evidence="1">
    <location>
        <position position="118"/>
    </location>
</feature>
<feature type="binding site" evidence="1">
    <location>
        <begin position="35"/>
        <end position="39"/>
    </location>
    <ligand>
        <name>NAD(+)</name>
        <dbReference type="ChEBI" id="CHEBI:57540"/>
    </ligand>
</feature>
<feature type="binding site" evidence="1">
    <location>
        <begin position="82"/>
        <end position="83"/>
    </location>
    <ligand>
        <name>NAD(+)</name>
        <dbReference type="ChEBI" id="CHEBI:57540"/>
    </ligand>
</feature>
<feature type="binding site" evidence="1">
    <location>
        <position position="116"/>
    </location>
    <ligand>
        <name>NAD(+)</name>
        <dbReference type="ChEBI" id="CHEBI:57540"/>
    </ligand>
</feature>
<feature type="binding site" evidence="1">
    <location>
        <position position="139"/>
    </location>
    <ligand>
        <name>NAD(+)</name>
        <dbReference type="ChEBI" id="CHEBI:57540"/>
    </ligand>
</feature>
<feature type="binding site" evidence="1">
    <location>
        <position position="174"/>
    </location>
    <ligand>
        <name>NAD(+)</name>
        <dbReference type="ChEBI" id="CHEBI:57540"/>
    </ligand>
</feature>
<feature type="binding site" evidence="1">
    <location>
        <position position="282"/>
    </location>
    <ligand>
        <name>NAD(+)</name>
        <dbReference type="ChEBI" id="CHEBI:57540"/>
    </ligand>
</feature>
<feature type="binding site" evidence="1">
    <location>
        <position position="306"/>
    </location>
    <ligand>
        <name>NAD(+)</name>
        <dbReference type="ChEBI" id="CHEBI:57540"/>
    </ligand>
</feature>
<feature type="binding site" evidence="1">
    <location>
        <position position="400"/>
    </location>
    <ligand>
        <name>Zn(2+)</name>
        <dbReference type="ChEBI" id="CHEBI:29105"/>
    </ligand>
</feature>
<feature type="binding site" evidence="1">
    <location>
        <position position="403"/>
    </location>
    <ligand>
        <name>Zn(2+)</name>
        <dbReference type="ChEBI" id="CHEBI:29105"/>
    </ligand>
</feature>
<feature type="binding site" evidence="1">
    <location>
        <position position="418"/>
    </location>
    <ligand>
        <name>Zn(2+)</name>
        <dbReference type="ChEBI" id="CHEBI:29105"/>
    </ligand>
</feature>
<feature type="binding site" evidence="1">
    <location>
        <position position="424"/>
    </location>
    <ligand>
        <name>Zn(2+)</name>
        <dbReference type="ChEBI" id="CHEBI:29105"/>
    </ligand>
</feature>
<name>DNLJ_EHRRW</name>
<dbReference type="EC" id="6.5.1.2" evidence="1"/>
<dbReference type="EMBL" id="CR767821">
    <property type="protein sequence ID" value="CAH58426.1"/>
    <property type="molecule type" value="Genomic_DNA"/>
</dbReference>
<dbReference type="EMBL" id="CR925678">
    <property type="protein sequence ID" value="CAI27223.1"/>
    <property type="molecule type" value="Genomic_DNA"/>
</dbReference>
<dbReference type="RefSeq" id="WP_011155373.1">
    <property type="nucleotide sequence ID" value="NC_005295.2"/>
</dbReference>
<dbReference type="SMR" id="Q5HAI7"/>
<dbReference type="GeneID" id="33057928"/>
<dbReference type="KEGG" id="eru:Erum6940"/>
<dbReference type="KEGG" id="erw:ERWE_CDS_07290"/>
<dbReference type="eggNOG" id="COG0272">
    <property type="taxonomic scope" value="Bacteria"/>
</dbReference>
<dbReference type="HOGENOM" id="CLU_007764_2_1_5"/>
<dbReference type="Proteomes" id="UP000001021">
    <property type="component" value="Chromosome"/>
</dbReference>
<dbReference type="GO" id="GO:0005829">
    <property type="term" value="C:cytosol"/>
    <property type="evidence" value="ECO:0007669"/>
    <property type="project" value="TreeGrafter"/>
</dbReference>
<dbReference type="GO" id="GO:0003911">
    <property type="term" value="F:DNA ligase (NAD+) activity"/>
    <property type="evidence" value="ECO:0007669"/>
    <property type="project" value="UniProtKB-UniRule"/>
</dbReference>
<dbReference type="GO" id="GO:0046872">
    <property type="term" value="F:metal ion binding"/>
    <property type="evidence" value="ECO:0007669"/>
    <property type="project" value="UniProtKB-KW"/>
</dbReference>
<dbReference type="GO" id="GO:0006281">
    <property type="term" value="P:DNA repair"/>
    <property type="evidence" value="ECO:0007669"/>
    <property type="project" value="UniProtKB-KW"/>
</dbReference>
<dbReference type="GO" id="GO:0006260">
    <property type="term" value="P:DNA replication"/>
    <property type="evidence" value="ECO:0007669"/>
    <property type="project" value="UniProtKB-KW"/>
</dbReference>
<dbReference type="CDD" id="cd17748">
    <property type="entry name" value="BRCT_DNA_ligase_like"/>
    <property type="match status" value="1"/>
</dbReference>
<dbReference type="CDD" id="cd00114">
    <property type="entry name" value="LIGANc"/>
    <property type="match status" value="1"/>
</dbReference>
<dbReference type="FunFam" id="2.40.50.140:FF:000012">
    <property type="entry name" value="DNA ligase"/>
    <property type="match status" value="1"/>
</dbReference>
<dbReference type="FunFam" id="3.30.470.30:FF:000001">
    <property type="entry name" value="DNA ligase"/>
    <property type="match status" value="1"/>
</dbReference>
<dbReference type="Gene3D" id="6.20.10.30">
    <property type="match status" value="1"/>
</dbReference>
<dbReference type="Gene3D" id="1.10.150.20">
    <property type="entry name" value="5' to 3' exonuclease, C-terminal subdomain"/>
    <property type="match status" value="2"/>
</dbReference>
<dbReference type="Gene3D" id="3.40.50.10190">
    <property type="entry name" value="BRCT domain"/>
    <property type="match status" value="1"/>
</dbReference>
<dbReference type="Gene3D" id="3.30.470.30">
    <property type="entry name" value="DNA ligase/mRNA capping enzyme"/>
    <property type="match status" value="1"/>
</dbReference>
<dbReference type="Gene3D" id="1.10.287.610">
    <property type="entry name" value="Helix hairpin bin"/>
    <property type="match status" value="1"/>
</dbReference>
<dbReference type="Gene3D" id="2.40.50.140">
    <property type="entry name" value="Nucleic acid-binding proteins"/>
    <property type="match status" value="1"/>
</dbReference>
<dbReference type="HAMAP" id="MF_01588">
    <property type="entry name" value="DNA_ligase_A"/>
    <property type="match status" value="1"/>
</dbReference>
<dbReference type="InterPro" id="IPR001357">
    <property type="entry name" value="BRCT_dom"/>
</dbReference>
<dbReference type="InterPro" id="IPR036420">
    <property type="entry name" value="BRCT_dom_sf"/>
</dbReference>
<dbReference type="InterPro" id="IPR041663">
    <property type="entry name" value="DisA/LigA_HHH"/>
</dbReference>
<dbReference type="InterPro" id="IPR001679">
    <property type="entry name" value="DNA_ligase"/>
</dbReference>
<dbReference type="InterPro" id="IPR018239">
    <property type="entry name" value="DNA_ligase_AS"/>
</dbReference>
<dbReference type="InterPro" id="IPR013839">
    <property type="entry name" value="DNAligase_adenylation"/>
</dbReference>
<dbReference type="InterPro" id="IPR013840">
    <property type="entry name" value="DNAligase_N"/>
</dbReference>
<dbReference type="InterPro" id="IPR012340">
    <property type="entry name" value="NA-bd_OB-fold"/>
</dbReference>
<dbReference type="InterPro" id="IPR004150">
    <property type="entry name" value="NAD_DNA_ligase_OB"/>
</dbReference>
<dbReference type="InterPro" id="IPR010994">
    <property type="entry name" value="RuvA_2-like"/>
</dbReference>
<dbReference type="NCBIfam" id="TIGR00575">
    <property type="entry name" value="dnlj"/>
    <property type="match status" value="1"/>
</dbReference>
<dbReference type="NCBIfam" id="NF005932">
    <property type="entry name" value="PRK07956.1"/>
    <property type="match status" value="1"/>
</dbReference>
<dbReference type="PANTHER" id="PTHR23389">
    <property type="entry name" value="CHROMOSOME TRANSMISSION FIDELITY FACTOR 18"/>
    <property type="match status" value="1"/>
</dbReference>
<dbReference type="PANTHER" id="PTHR23389:SF9">
    <property type="entry name" value="DNA LIGASE"/>
    <property type="match status" value="1"/>
</dbReference>
<dbReference type="Pfam" id="PF00533">
    <property type="entry name" value="BRCT"/>
    <property type="match status" value="1"/>
</dbReference>
<dbReference type="Pfam" id="PF01653">
    <property type="entry name" value="DNA_ligase_aden"/>
    <property type="match status" value="1"/>
</dbReference>
<dbReference type="Pfam" id="PF03120">
    <property type="entry name" value="DNA_ligase_OB"/>
    <property type="match status" value="1"/>
</dbReference>
<dbReference type="Pfam" id="PF12826">
    <property type="entry name" value="HHH_2"/>
    <property type="match status" value="1"/>
</dbReference>
<dbReference type="Pfam" id="PF22745">
    <property type="entry name" value="Nlig-Ia"/>
    <property type="match status" value="1"/>
</dbReference>
<dbReference type="PIRSF" id="PIRSF001604">
    <property type="entry name" value="LigA"/>
    <property type="match status" value="1"/>
</dbReference>
<dbReference type="SMART" id="SM00292">
    <property type="entry name" value="BRCT"/>
    <property type="match status" value="1"/>
</dbReference>
<dbReference type="SMART" id="SM00532">
    <property type="entry name" value="LIGANc"/>
    <property type="match status" value="1"/>
</dbReference>
<dbReference type="SUPFAM" id="SSF52113">
    <property type="entry name" value="BRCT domain"/>
    <property type="match status" value="1"/>
</dbReference>
<dbReference type="SUPFAM" id="SSF56091">
    <property type="entry name" value="DNA ligase/mRNA capping enzyme, catalytic domain"/>
    <property type="match status" value="1"/>
</dbReference>
<dbReference type="SUPFAM" id="SSF50249">
    <property type="entry name" value="Nucleic acid-binding proteins"/>
    <property type="match status" value="1"/>
</dbReference>
<dbReference type="SUPFAM" id="SSF47781">
    <property type="entry name" value="RuvA domain 2-like"/>
    <property type="match status" value="1"/>
</dbReference>
<dbReference type="PROSITE" id="PS50172">
    <property type="entry name" value="BRCT"/>
    <property type="match status" value="1"/>
</dbReference>
<dbReference type="PROSITE" id="PS01055">
    <property type="entry name" value="DNA_LIGASE_N1"/>
    <property type="match status" value="1"/>
</dbReference>
<evidence type="ECO:0000255" key="1">
    <source>
        <dbReference type="HAMAP-Rule" id="MF_01588"/>
    </source>
</evidence>